<keyword id="KW-0028">Amino-acid biosynthesis</keyword>
<keyword id="KW-0055">Arginine biosynthesis</keyword>
<keyword id="KW-0963">Cytoplasm</keyword>
<keyword id="KW-0521">NADP</keyword>
<keyword id="KW-0560">Oxidoreductase</keyword>
<feature type="chain" id="PRO_1000123238" description="N-acetyl-gamma-glutamyl-phosphate reductase">
    <location>
        <begin position="1"/>
        <end position="344"/>
    </location>
</feature>
<feature type="active site" evidence="1">
    <location>
        <position position="148"/>
    </location>
</feature>
<accession>B9E1X0</accession>
<sequence>MVQVGVIGGTGYVGAELIRLLSNHNKIKISGISSTSYEGKSINSLYPGFYDLKELVCEKDDEVIKRSDLIFLALPSGVSEPIVEKAVAKDKICIDMGADFRFKNESSYKKWYGKNFITPKLHESSVYGLPELNREYIKKSRVIGNPGCYATSVQIGVLPLISKGLIEEKGIIADCKSGLTGAGKTLSESSHFVNCNESFSAYKVANHRHTPEIEENLNSVSKEGVKLTFIPHLIPINRGILSTIYTTPKDPIDIEKIHQKYCEFYKEEPFVRILPLGKVSKINNVRLSNYCCISIHYDSENNKLIIISCLDNMIKGAAGQAIQNMNIVLGFDEKEGLTALPAVF</sequence>
<name>ARGC_CLOK1</name>
<protein>
    <recommendedName>
        <fullName evidence="1">N-acetyl-gamma-glutamyl-phosphate reductase</fullName>
        <shortName evidence="1">AGPR</shortName>
        <ecNumber evidence="1">1.2.1.38</ecNumber>
    </recommendedName>
    <alternativeName>
        <fullName evidence="1">N-acetyl-glutamate semialdehyde dehydrogenase</fullName>
        <shortName evidence="1">NAGSA dehydrogenase</shortName>
    </alternativeName>
</protein>
<reference key="1">
    <citation type="submission" date="2005-09" db="EMBL/GenBank/DDBJ databases">
        <title>Complete genome sequence of Clostridium kluyveri and comparative genomics of Clostridia species.</title>
        <authorList>
            <person name="Inui M."/>
            <person name="Nonaka H."/>
            <person name="Shinoda Y."/>
            <person name="Ikenaga Y."/>
            <person name="Abe M."/>
            <person name="Naito K."/>
            <person name="Vertes A.A."/>
            <person name="Yukawa H."/>
        </authorList>
    </citation>
    <scope>NUCLEOTIDE SEQUENCE [LARGE SCALE GENOMIC DNA]</scope>
    <source>
        <strain>NBRC 12016</strain>
    </source>
</reference>
<organism>
    <name type="scientific">Clostridium kluyveri (strain NBRC 12016)</name>
    <dbReference type="NCBI Taxonomy" id="583346"/>
    <lineage>
        <taxon>Bacteria</taxon>
        <taxon>Bacillati</taxon>
        <taxon>Bacillota</taxon>
        <taxon>Clostridia</taxon>
        <taxon>Eubacteriales</taxon>
        <taxon>Clostridiaceae</taxon>
        <taxon>Clostridium</taxon>
    </lineage>
</organism>
<comment type="function">
    <text evidence="1">Catalyzes the NADPH-dependent reduction of N-acetyl-5-glutamyl phosphate to yield N-acetyl-L-glutamate 5-semialdehyde.</text>
</comment>
<comment type="catalytic activity">
    <reaction evidence="1">
        <text>N-acetyl-L-glutamate 5-semialdehyde + phosphate + NADP(+) = N-acetyl-L-glutamyl 5-phosphate + NADPH + H(+)</text>
        <dbReference type="Rhea" id="RHEA:21588"/>
        <dbReference type="ChEBI" id="CHEBI:15378"/>
        <dbReference type="ChEBI" id="CHEBI:29123"/>
        <dbReference type="ChEBI" id="CHEBI:43474"/>
        <dbReference type="ChEBI" id="CHEBI:57783"/>
        <dbReference type="ChEBI" id="CHEBI:57936"/>
        <dbReference type="ChEBI" id="CHEBI:58349"/>
        <dbReference type="EC" id="1.2.1.38"/>
    </reaction>
</comment>
<comment type="pathway">
    <text evidence="1">Amino-acid biosynthesis; L-arginine biosynthesis; N(2)-acetyl-L-ornithine from L-glutamate: step 3/4.</text>
</comment>
<comment type="subcellular location">
    <subcellularLocation>
        <location evidence="1">Cytoplasm</location>
    </subcellularLocation>
</comment>
<comment type="similarity">
    <text evidence="1">Belongs to the NAGSA dehydrogenase family. Type 1 subfamily.</text>
</comment>
<evidence type="ECO:0000255" key="1">
    <source>
        <dbReference type="HAMAP-Rule" id="MF_00150"/>
    </source>
</evidence>
<proteinExistence type="inferred from homology"/>
<gene>
    <name evidence="1" type="primary">argC</name>
    <name type="ordered locus">CKR_1444</name>
</gene>
<dbReference type="EC" id="1.2.1.38" evidence="1"/>
<dbReference type="EMBL" id="AP009049">
    <property type="protein sequence ID" value="BAH06495.1"/>
    <property type="molecule type" value="Genomic_DNA"/>
</dbReference>
<dbReference type="RefSeq" id="WP_012101945.1">
    <property type="nucleotide sequence ID" value="NC_011837.1"/>
</dbReference>
<dbReference type="SMR" id="B9E1X0"/>
<dbReference type="KEGG" id="ckr:CKR_1444"/>
<dbReference type="HOGENOM" id="CLU_006384_0_1_9"/>
<dbReference type="UniPathway" id="UPA00068">
    <property type="reaction ID" value="UER00108"/>
</dbReference>
<dbReference type="Proteomes" id="UP000007969">
    <property type="component" value="Chromosome"/>
</dbReference>
<dbReference type="GO" id="GO:0005737">
    <property type="term" value="C:cytoplasm"/>
    <property type="evidence" value="ECO:0007669"/>
    <property type="project" value="UniProtKB-SubCell"/>
</dbReference>
<dbReference type="GO" id="GO:0003942">
    <property type="term" value="F:N-acetyl-gamma-glutamyl-phosphate reductase activity"/>
    <property type="evidence" value="ECO:0007669"/>
    <property type="project" value="UniProtKB-UniRule"/>
</dbReference>
<dbReference type="GO" id="GO:0051287">
    <property type="term" value="F:NAD binding"/>
    <property type="evidence" value="ECO:0007669"/>
    <property type="project" value="InterPro"/>
</dbReference>
<dbReference type="GO" id="GO:0070401">
    <property type="term" value="F:NADP+ binding"/>
    <property type="evidence" value="ECO:0007669"/>
    <property type="project" value="InterPro"/>
</dbReference>
<dbReference type="GO" id="GO:0006526">
    <property type="term" value="P:L-arginine biosynthetic process"/>
    <property type="evidence" value="ECO:0007669"/>
    <property type="project" value="UniProtKB-UniRule"/>
</dbReference>
<dbReference type="CDD" id="cd23934">
    <property type="entry name" value="AGPR_1_C"/>
    <property type="match status" value="1"/>
</dbReference>
<dbReference type="CDD" id="cd17895">
    <property type="entry name" value="AGPR_1_N"/>
    <property type="match status" value="1"/>
</dbReference>
<dbReference type="FunFam" id="3.30.360.10:FF:000014">
    <property type="entry name" value="N-acetyl-gamma-glutamyl-phosphate reductase"/>
    <property type="match status" value="1"/>
</dbReference>
<dbReference type="Gene3D" id="3.30.360.10">
    <property type="entry name" value="Dihydrodipicolinate Reductase, domain 2"/>
    <property type="match status" value="1"/>
</dbReference>
<dbReference type="Gene3D" id="3.40.50.720">
    <property type="entry name" value="NAD(P)-binding Rossmann-like Domain"/>
    <property type="match status" value="1"/>
</dbReference>
<dbReference type="HAMAP" id="MF_00150">
    <property type="entry name" value="ArgC_type1"/>
    <property type="match status" value="1"/>
</dbReference>
<dbReference type="InterPro" id="IPR023013">
    <property type="entry name" value="AGPR_AS"/>
</dbReference>
<dbReference type="InterPro" id="IPR000706">
    <property type="entry name" value="AGPR_type-1"/>
</dbReference>
<dbReference type="InterPro" id="IPR036291">
    <property type="entry name" value="NAD(P)-bd_dom_sf"/>
</dbReference>
<dbReference type="InterPro" id="IPR050085">
    <property type="entry name" value="NAGSA_dehydrogenase"/>
</dbReference>
<dbReference type="InterPro" id="IPR000534">
    <property type="entry name" value="Semialdehyde_DH_NAD-bd"/>
</dbReference>
<dbReference type="NCBIfam" id="TIGR01850">
    <property type="entry name" value="argC"/>
    <property type="match status" value="1"/>
</dbReference>
<dbReference type="PANTHER" id="PTHR32338:SF10">
    <property type="entry name" value="N-ACETYL-GAMMA-GLUTAMYL-PHOSPHATE REDUCTASE, CHLOROPLASTIC-RELATED"/>
    <property type="match status" value="1"/>
</dbReference>
<dbReference type="PANTHER" id="PTHR32338">
    <property type="entry name" value="N-ACETYL-GAMMA-GLUTAMYL-PHOSPHATE REDUCTASE, CHLOROPLASTIC-RELATED-RELATED"/>
    <property type="match status" value="1"/>
</dbReference>
<dbReference type="Pfam" id="PF01118">
    <property type="entry name" value="Semialdhyde_dh"/>
    <property type="match status" value="1"/>
</dbReference>
<dbReference type="Pfam" id="PF22698">
    <property type="entry name" value="Semialdhyde_dhC_1"/>
    <property type="match status" value="1"/>
</dbReference>
<dbReference type="SMART" id="SM00859">
    <property type="entry name" value="Semialdhyde_dh"/>
    <property type="match status" value="1"/>
</dbReference>
<dbReference type="SUPFAM" id="SSF55347">
    <property type="entry name" value="Glyceraldehyde-3-phosphate dehydrogenase-like, C-terminal domain"/>
    <property type="match status" value="1"/>
</dbReference>
<dbReference type="SUPFAM" id="SSF51735">
    <property type="entry name" value="NAD(P)-binding Rossmann-fold domains"/>
    <property type="match status" value="1"/>
</dbReference>
<dbReference type="PROSITE" id="PS01224">
    <property type="entry name" value="ARGC"/>
    <property type="match status" value="1"/>
</dbReference>